<dbReference type="EC" id="4.1.2.40" evidence="1"/>
<dbReference type="EMBL" id="CP000948">
    <property type="protein sequence ID" value="ACB04216.1"/>
    <property type="molecule type" value="Genomic_DNA"/>
</dbReference>
<dbReference type="RefSeq" id="WP_000022766.1">
    <property type="nucleotide sequence ID" value="NC_010473.1"/>
</dbReference>
<dbReference type="SMR" id="B1XGU9"/>
<dbReference type="GeneID" id="75203745"/>
<dbReference type="KEGG" id="ecd:ECDH10B_3310"/>
<dbReference type="HOGENOM" id="CLU_040088_0_1_6"/>
<dbReference type="UniPathway" id="UPA00704">
    <property type="reaction ID" value="UER00716"/>
</dbReference>
<dbReference type="GO" id="GO:0005829">
    <property type="term" value="C:cytosol"/>
    <property type="evidence" value="ECO:0007669"/>
    <property type="project" value="TreeGrafter"/>
</dbReference>
<dbReference type="GO" id="GO:0009025">
    <property type="term" value="F:tagatose-bisphosphate aldolase activity"/>
    <property type="evidence" value="ECO:0007669"/>
    <property type="project" value="UniProtKB-UniRule"/>
</dbReference>
<dbReference type="GO" id="GO:0008270">
    <property type="term" value="F:zinc ion binding"/>
    <property type="evidence" value="ECO:0007669"/>
    <property type="project" value="UniProtKB-UniRule"/>
</dbReference>
<dbReference type="GO" id="GO:0005975">
    <property type="term" value="P:carbohydrate metabolic process"/>
    <property type="evidence" value="ECO:0007669"/>
    <property type="project" value="InterPro"/>
</dbReference>
<dbReference type="GO" id="GO:2001059">
    <property type="term" value="P:D-tagatose 6-phosphate catabolic process"/>
    <property type="evidence" value="ECO:0007669"/>
    <property type="project" value="UniProtKB-UniRule"/>
</dbReference>
<dbReference type="CDD" id="cd00453">
    <property type="entry name" value="FTBP_aldolase_II"/>
    <property type="match status" value="1"/>
</dbReference>
<dbReference type="FunFam" id="3.20.20.70:FF:000043">
    <property type="entry name" value="D-tagatose-1,6-bisphosphate aldolase subunit GatY"/>
    <property type="match status" value="1"/>
</dbReference>
<dbReference type="Gene3D" id="3.20.20.70">
    <property type="entry name" value="Aldolase class I"/>
    <property type="match status" value="1"/>
</dbReference>
<dbReference type="HAMAP" id="MF_01293">
    <property type="entry name" value="TagBP_aldolase_KbaY"/>
    <property type="match status" value="1"/>
</dbReference>
<dbReference type="InterPro" id="IPR013785">
    <property type="entry name" value="Aldolase_TIM"/>
</dbReference>
<dbReference type="InterPro" id="IPR050246">
    <property type="entry name" value="Class_II_FBP_aldolase"/>
</dbReference>
<dbReference type="InterPro" id="IPR000771">
    <property type="entry name" value="FBA_II"/>
</dbReference>
<dbReference type="InterPro" id="IPR023788">
    <property type="entry name" value="TagBP_ald_KbaY"/>
</dbReference>
<dbReference type="InterPro" id="IPR011288">
    <property type="entry name" value="TagBP_ald_KbaY/GatY"/>
</dbReference>
<dbReference type="NCBIfam" id="TIGR00167">
    <property type="entry name" value="cbbA"/>
    <property type="match status" value="1"/>
</dbReference>
<dbReference type="NCBIfam" id="NF006626">
    <property type="entry name" value="PRK09195.1"/>
    <property type="match status" value="1"/>
</dbReference>
<dbReference type="NCBIfam" id="NF009374">
    <property type="entry name" value="PRK12737.1"/>
    <property type="match status" value="1"/>
</dbReference>
<dbReference type="NCBIfam" id="NF009375">
    <property type="entry name" value="PRK12738.1"/>
    <property type="match status" value="1"/>
</dbReference>
<dbReference type="NCBIfam" id="TIGR01858">
    <property type="entry name" value="tag_bisphos_ald"/>
    <property type="match status" value="1"/>
</dbReference>
<dbReference type="PANTHER" id="PTHR30304">
    <property type="entry name" value="D-TAGATOSE-1,6-BISPHOSPHATE ALDOLASE"/>
    <property type="match status" value="1"/>
</dbReference>
<dbReference type="PANTHER" id="PTHR30304:SF0">
    <property type="entry name" value="D-TAGATOSE-1,6-BISPHOSPHATE ALDOLASE SUBUNIT GATY-RELATED"/>
    <property type="match status" value="1"/>
</dbReference>
<dbReference type="Pfam" id="PF01116">
    <property type="entry name" value="F_bP_aldolase"/>
    <property type="match status" value="1"/>
</dbReference>
<dbReference type="PIRSF" id="PIRSF001359">
    <property type="entry name" value="F_bP_aldolase_II"/>
    <property type="match status" value="1"/>
</dbReference>
<dbReference type="SUPFAM" id="SSF51569">
    <property type="entry name" value="Aldolase"/>
    <property type="match status" value="1"/>
</dbReference>
<dbReference type="PROSITE" id="PS00602">
    <property type="entry name" value="ALDOLASE_CLASS_II_1"/>
    <property type="match status" value="1"/>
</dbReference>
<dbReference type="PROSITE" id="PS00806">
    <property type="entry name" value="ALDOLASE_CLASS_II_2"/>
    <property type="match status" value="1"/>
</dbReference>
<feature type="chain" id="PRO_0000355322" description="D-tagatose-1,6-bisphosphate aldolase subunit KbaY">
    <location>
        <begin position="1"/>
        <end position="286"/>
    </location>
</feature>
<feature type="active site" description="Proton donor" evidence="1">
    <location>
        <position position="82"/>
    </location>
</feature>
<feature type="binding site" evidence="1">
    <location>
        <position position="83"/>
    </location>
    <ligand>
        <name>Zn(2+)</name>
        <dbReference type="ChEBI" id="CHEBI:29105"/>
        <note>catalytic</note>
    </ligand>
</feature>
<feature type="binding site" evidence="1">
    <location>
        <position position="180"/>
    </location>
    <ligand>
        <name>Zn(2+)</name>
        <dbReference type="ChEBI" id="CHEBI:29105"/>
        <note>catalytic</note>
    </ligand>
</feature>
<feature type="binding site" evidence="1">
    <location>
        <position position="181"/>
    </location>
    <ligand>
        <name>dihydroxyacetone phosphate</name>
        <dbReference type="ChEBI" id="CHEBI:57642"/>
    </ligand>
</feature>
<feature type="binding site" evidence="1">
    <location>
        <position position="208"/>
    </location>
    <ligand>
        <name>Zn(2+)</name>
        <dbReference type="ChEBI" id="CHEBI:29105"/>
        <note>catalytic</note>
    </ligand>
</feature>
<feature type="binding site" evidence="1">
    <location>
        <begin position="209"/>
        <end position="211"/>
    </location>
    <ligand>
        <name>dihydroxyacetone phosphate</name>
        <dbReference type="ChEBI" id="CHEBI:57642"/>
    </ligand>
</feature>
<feature type="binding site" evidence="1">
    <location>
        <begin position="230"/>
        <end position="233"/>
    </location>
    <ligand>
        <name>dihydroxyacetone phosphate</name>
        <dbReference type="ChEBI" id="CHEBI:57642"/>
    </ligand>
</feature>
<comment type="function">
    <text evidence="1">Catalytic subunit of the tagatose-1,6-bisphosphate aldolase KbaYZ, which catalyzes the reversible aldol condensation of dihydroxyacetone phosphate (DHAP or glycerone-phosphate) with glyceraldehyde 3-phosphate (G3P) to produce tagatose 1,6-bisphosphate (TBP). Requires KbaZ subunit for full activity and stability.</text>
</comment>
<comment type="catalytic activity">
    <reaction evidence="1">
        <text>D-tagatofuranose 1,6-bisphosphate = D-glyceraldehyde 3-phosphate + dihydroxyacetone phosphate</text>
        <dbReference type="Rhea" id="RHEA:22948"/>
        <dbReference type="ChEBI" id="CHEBI:57642"/>
        <dbReference type="ChEBI" id="CHEBI:58694"/>
        <dbReference type="ChEBI" id="CHEBI:59776"/>
        <dbReference type="EC" id="4.1.2.40"/>
    </reaction>
</comment>
<comment type="cofactor">
    <cofactor evidence="1">
        <name>Zn(2+)</name>
        <dbReference type="ChEBI" id="CHEBI:29105"/>
    </cofactor>
    <text evidence="1">Binds 1 zinc ion per subunit.</text>
</comment>
<comment type="pathway">
    <text evidence="1">Carbohydrate metabolism; D-tagatose 6-phosphate degradation; D-glyceraldehyde 3-phosphate and glycerone phosphate from D-tagatose 6-phosphate: step 2/2.</text>
</comment>
<comment type="subunit">
    <text evidence="1">Homotetramer. Forms a complex with KbaZ.</text>
</comment>
<comment type="similarity">
    <text evidence="1">Belongs to the class II fructose-bisphosphate aldolase family. TagBP aldolase KbaY subfamily.</text>
</comment>
<organism>
    <name type="scientific">Escherichia coli (strain K12 / DH10B)</name>
    <dbReference type="NCBI Taxonomy" id="316385"/>
    <lineage>
        <taxon>Bacteria</taxon>
        <taxon>Pseudomonadati</taxon>
        <taxon>Pseudomonadota</taxon>
        <taxon>Gammaproteobacteria</taxon>
        <taxon>Enterobacterales</taxon>
        <taxon>Enterobacteriaceae</taxon>
        <taxon>Escherichia</taxon>
    </lineage>
</organism>
<keyword id="KW-0456">Lyase</keyword>
<keyword id="KW-0479">Metal-binding</keyword>
<keyword id="KW-0862">Zinc</keyword>
<name>KBAY_ECODH</name>
<reference key="1">
    <citation type="journal article" date="2008" name="J. Bacteriol.">
        <title>The complete genome sequence of Escherichia coli DH10B: insights into the biology of a laboratory workhorse.</title>
        <authorList>
            <person name="Durfee T."/>
            <person name="Nelson R."/>
            <person name="Baldwin S."/>
            <person name="Plunkett G. III"/>
            <person name="Burland V."/>
            <person name="Mau B."/>
            <person name="Petrosino J.F."/>
            <person name="Qin X."/>
            <person name="Muzny D.M."/>
            <person name="Ayele M."/>
            <person name="Gibbs R.A."/>
            <person name="Csorgo B."/>
            <person name="Posfai G."/>
            <person name="Weinstock G.M."/>
            <person name="Blattner F.R."/>
        </authorList>
    </citation>
    <scope>NUCLEOTIDE SEQUENCE [LARGE SCALE GENOMIC DNA]</scope>
    <source>
        <strain>K12 / DH10B</strain>
    </source>
</reference>
<protein>
    <recommendedName>
        <fullName evidence="1">D-tagatose-1,6-bisphosphate aldolase subunit KbaY</fullName>
        <shortName evidence="1">TBPA</shortName>
        <shortName evidence="1">TagBP aldolase</shortName>
        <ecNumber evidence="1">4.1.2.40</ecNumber>
    </recommendedName>
    <alternativeName>
        <fullName evidence="1">D-tagatose-bisphosphate aldolase class II</fullName>
    </alternativeName>
    <alternativeName>
        <fullName evidence="1">Ketose 1,6-bisphosphate aldolase class II</fullName>
    </alternativeName>
    <alternativeName>
        <fullName evidence="1">Tagatose-bisphosphate aldolase</fullName>
    </alternativeName>
</protein>
<evidence type="ECO:0000255" key="1">
    <source>
        <dbReference type="HAMAP-Rule" id="MF_01293"/>
    </source>
</evidence>
<gene>
    <name evidence="1" type="primary">kbaY</name>
    <name type="ordered locus">ECDH10B_3310</name>
</gene>
<proteinExistence type="inferred from homology"/>
<sequence>MSIISTKYLLQDAQANGYAVPAFNIHNAETIQAILEVCSEMRSPVILAGTPGTFKHIALEEIYALCSAYSTTYNMPLALHLDHHESLDDIRRKVHAGVRSAMIDGSHFPFAENVKLVKSVVDFCHSQDCSVEAELGRLGGVEDDMSVDAESAFLTDPQEAKRFVELTGVDSLAVAIGTAHGLYSKTPKIDFQRLAEIREVVDVPLVLHGASDVPDEFVRRTIELGVTKVNVATELKIAFAGAVKAWFAENPQGNDPRYYMRVGMDAMKEVVRNKINVCGSANRISA</sequence>
<accession>B1XGU9</accession>